<feature type="chain" id="PRO_1000057975" description="Phosphoglycerate kinase">
    <location>
        <begin position="1"/>
        <end position="397"/>
    </location>
</feature>
<feature type="binding site" evidence="1">
    <location>
        <begin position="21"/>
        <end position="23"/>
    </location>
    <ligand>
        <name>substrate</name>
    </ligand>
</feature>
<feature type="binding site" evidence="1">
    <location>
        <position position="37"/>
    </location>
    <ligand>
        <name>substrate</name>
    </ligand>
</feature>
<feature type="binding site" evidence="1">
    <location>
        <begin position="60"/>
        <end position="63"/>
    </location>
    <ligand>
        <name>substrate</name>
    </ligand>
</feature>
<feature type="binding site" evidence="1">
    <location>
        <position position="119"/>
    </location>
    <ligand>
        <name>substrate</name>
    </ligand>
</feature>
<feature type="binding site" evidence="1">
    <location>
        <position position="152"/>
    </location>
    <ligand>
        <name>substrate</name>
    </ligand>
</feature>
<feature type="binding site" evidence="1">
    <location>
        <position position="203"/>
    </location>
    <ligand>
        <name>ATP</name>
        <dbReference type="ChEBI" id="CHEBI:30616"/>
    </ligand>
</feature>
<feature type="binding site" evidence="1">
    <location>
        <position position="294"/>
    </location>
    <ligand>
        <name>ATP</name>
        <dbReference type="ChEBI" id="CHEBI:30616"/>
    </ligand>
</feature>
<feature type="binding site" evidence="1">
    <location>
        <position position="325"/>
    </location>
    <ligand>
        <name>ATP</name>
        <dbReference type="ChEBI" id="CHEBI:30616"/>
    </ligand>
</feature>
<feature type="binding site" evidence="1">
    <location>
        <begin position="354"/>
        <end position="357"/>
    </location>
    <ligand>
        <name>ATP</name>
        <dbReference type="ChEBI" id="CHEBI:30616"/>
    </ligand>
</feature>
<evidence type="ECO:0000255" key="1">
    <source>
        <dbReference type="HAMAP-Rule" id="MF_00145"/>
    </source>
</evidence>
<sequence>MEKKTLSDIATQGKRVLMRVDFNVPLDENKNITDDKRIVESLPSIRKVIEEGGRLILMSHLGRPKGKVNAEFSLAPVAARLSELLDCPVGMAKDCIGTEVMQQVLALQDGEVLLLENLRFHAEEEANDADFAKELASLGEIYVNDAFGTAHRAHASTEGITHYVQTAVAGFLIERELRYLGKALQEPERPFVAILGGSKISGKIDVLENLFKKVDTVLIGGAMVFTFFKAQGYEVGKSLVEESKIELALSILEQAKAKGIKLLLPTDVVVTAEISADAESSVASIADMPNNLIGVDIGPETAAAYRNEIIGARTVLWNGPMGVFELDNFATGTIAVAQALADATAQGATTIVGGGDSAAAIAKAGLASEITHISTGGGASLEFLEGKELPGIAALNN</sequence>
<name>PGK_CHLCH</name>
<comment type="catalytic activity">
    <reaction evidence="1">
        <text>(2R)-3-phosphoglycerate + ATP = (2R)-3-phospho-glyceroyl phosphate + ADP</text>
        <dbReference type="Rhea" id="RHEA:14801"/>
        <dbReference type="ChEBI" id="CHEBI:30616"/>
        <dbReference type="ChEBI" id="CHEBI:57604"/>
        <dbReference type="ChEBI" id="CHEBI:58272"/>
        <dbReference type="ChEBI" id="CHEBI:456216"/>
        <dbReference type="EC" id="2.7.2.3"/>
    </reaction>
</comment>
<comment type="pathway">
    <text evidence="1">Carbohydrate degradation; glycolysis; pyruvate from D-glyceraldehyde 3-phosphate: step 2/5.</text>
</comment>
<comment type="subunit">
    <text evidence="1">Monomer.</text>
</comment>
<comment type="subcellular location">
    <subcellularLocation>
        <location evidence="1">Cytoplasm</location>
    </subcellularLocation>
</comment>
<comment type="similarity">
    <text evidence="1">Belongs to the phosphoglycerate kinase family.</text>
</comment>
<organism>
    <name type="scientific">Chlorobium chlorochromatii (strain CaD3)</name>
    <dbReference type="NCBI Taxonomy" id="340177"/>
    <lineage>
        <taxon>Bacteria</taxon>
        <taxon>Pseudomonadati</taxon>
        <taxon>Chlorobiota</taxon>
        <taxon>Chlorobiia</taxon>
        <taxon>Chlorobiales</taxon>
        <taxon>Chlorobiaceae</taxon>
        <taxon>Chlorobium/Pelodictyon group</taxon>
        <taxon>Chlorobium</taxon>
    </lineage>
</organism>
<dbReference type="EC" id="2.7.2.3" evidence="1"/>
<dbReference type="EMBL" id="CP000108">
    <property type="protein sequence ID" value="ABB27323.1"/>
    <property type="molecule type" value="Genomic_DNA"/>
</dbReference>
<dbReference type="SMR" id="Q3ANU2"/>
<dbReference type="STRING" id="340177.Cag_0044"/>
<dbReference type="KEGG" id="cch:Cag_0044"/>
<dbReference type="eggNOG" id="COG0126">
    <property type="taxonomic scope" value="Bacteria"/>
</dbReference>
<dbReference type="HOGENOM" id="CLU_025427_0_2_10"/>
<dbReference type="OrthoDB" id="9808460at2"/>
<dbReference type="UniPathway" id="UPA00109">
    <property type="reaction ID" value="UER00185"/>
</dbReference>
<dbReference type="GO" id="GO:0005829">
    <property type="term" value="C:cytosol"/>
    <property type="evidence" value="ECO:0007669"/>
    <property type="project" value="TreeGrafter"/>
</dbReference>
<dbReference type="GO" id="GO:0043531">
    <property type="term" value="F:ADP binding"/>
    <property type="evidence" value="ECO:0007669"/>
    <property type="project" value="TreeGrafter"/>
</dbReference>
<dbReference type="GO" id="GO:0005524">
    <property type="term" value="F:ATP binding"/>
    <property type="evidence" value="ECO:0007669"/>
    <property type="project" value="UniProtKB-KW"/>
</dbReference>
<dbReference type="GO" id="GO:0004618">
    <property type="term" value="F:phosphoglycerate kinase activity"/>
    <property type="evidence" value="ECO:0007669"/>
    <property type="project" value="UniProtKB-UniRule"/>
</dbReference>
<dbReference type="GO" id="GO:0006094">
    <property type="term" value="P:gluconeogenesis"/>
    <property type="evidence" value="ECO:0007669"/>
    <property type="project" value="TreeGrafter"/>
</dbReference>
<dbReference type="GO" id="GO:0006096">
    <property type="term" value="P:glycolytic process"/>
    <property type="evidence" value="ECO:0007669"/>
    <property type="project" value="UniProtKB-UniRule"/>
</dbReference>
<dbReference type="CDD" id="cd00318">
    <property type="entry name" value="Phosphoglycerate_kinase"/>
    <property type="match status" value="1"/>
</dbReference>
<dbReference type="FunFam" id="3.40.50.1260:FF:000003">
    <property type="entry name" value="Phosphoglycerate kinase"/>
    <property type="match status" value="1"/>
</dbReference>
<dbReference type="FunFam" id="3.40.50.1260:FF:000006">
    <property type="entry name" value="Phosphoglycerate kinase"/>
    <property type="match status" value="1"/>
</dbReference>
<dbReference type="Gene3D" id="3.40.50.1260">
    <property type="entry name" value="Phosphoglycerate kinase, N-terminal domain"/>
    <property type="match status" value="2"/>
</dbReference>
<dbReference type="HAMAP" id="MF_00145">
    <property type="entry name" value="Phosphoglyc_kinase"/>
    <property type="match status" value="1"/>
</dbReference>
<dbReference type="InterPro" id="IPR001576">
    <property type="entry name" value="Phosphoglycerate_kinase"/>
</dbReference>
<dbReference type="InterPro" id="IPR015911">
    <property type="entry name" value="Phosphoglycerate_kinase_CS"/>
</dbReference>
<dbReference type="InterPro" id="IPR015824">
    <property type="entry name" value="Phosphoglycerate_kinase_N"/>
</dbReference>
<dbReference type="InterPro" id="IPR036043">
    <property type="entry name" value="Phosphoglycerate_kinase_sf"/>
</dbReference>
<dbReference type="PANTHER" id="PTHR11406">
    <property type="entry name" value="PHOSPHOGLYCERATE KINASE"/>
    <property type="match status" value="1"/>
</dbReference>
<dbReference type="PANTHER" id="PTHR11406:SF23">
    <property type="entry name" value="PHOSPHOGLYCERATE KINASE 1, CHLOROPLASTIC-RELATED"/>
    <property type="match status" value="1"/>
</dbReference>
<dbReference type="Pfam" id="PF00162">
    <property type="entry name" value="PGK"/>
    <property type="match status" value="1"/>
</dbReference>
<dbReference type="PIRSF" id="PIRSF000724">
    <property type="entry name" value="Pgk"/>
    <property type="match status" value="1"/>
</dbReference>
<dbReference type="PRINTS" id="PR00477">
    <property type="entry name" value="PHGLYCKINASE"/>
</dbReference>
<dbReference type="SUPFAM" id="SSF53748">
    <property type="entry name" value="Phosphoglycerate kinase"/>
    <property type="match status" value="1"/>
</dbReference>
<dbReference type="PROSITE" id="PS00111">
    <property type="entry name" value="PGLYCERATE_KINASE"/>
    <property type="match status" value="1"/>
</dbReference>
<keyword id="KW-0067">ATP-binding</keyword>
<keyword id="KW-0963">Cytoplasm</keyword>
<keyword id="KW-0324">Glycolysis</keyword>
<keyword id="KW-0418">Kinase</keyword>
<keyword id="KW-0547">Nucleotide-binding</keyword>
<keyword id="KW-0808">Transferase</keyword>
<accession>Q3ANU2</accession>
<proteinExistence type="inferred from homology"/>
<protein>
    <recommendedName>
        <fullName evidence="1">Phosphoglycerate kinase</fullName>
        <ecNumber evidence="1">2.7.2.3</ecNumber>
    </recommendedName>
</protein>
<reference key="1">
    <citation type="submission" date="2005-08" db="EMBL/GenBank/DDBJ databases">
        <title>Complete sequence of Chlorobium chlorochromatii CaD3.</title>
        <authorList>
            <consortium name="US DOE Joint Genome Institute"/>
            <person name="Copeland A."/>
            <person name="Lucas S."/>
            <person name="Lapidus A."/>
            <person name="Barry K."/>
            <person name="Detter J.C."/>
            <person name="Glavina T."/>
            <person name="Hammon N."/>
            <person name="Israni S."/>
            <person name="Pitluck S."/>
            <person name="Bryant D."/>
            <person name="Schmutz J."/>
            <person name="Larimer F."/>
            <person name="Land M."/>
            <person name="Kyrpides N."/>
            <person name="Ivanova N."/>
            <person name="Richardson P."/>
        </authorList>
    </citation>
    <scope>NUCLEOTIDE SEQUENCE [LARGE SCALE GENOMIC DNA]</scope>
    <source>
        <strain>CaD3</strain>
    </source>
</reference>
<gene>
    <name evidence="1" type="primary">pgk</name>
    <name type="ordered locus">Cag_0044</name>
</gene>